<accession>Q0TBJ7</accession>
<keyword id="KW-0143">Chaperone</keyword>
<keyword id="KW-0963">Cytoplasm</keyword>
<keyword id="KW-0653">Protein transport</keyword>
<keyword id="KW-0811">Translocation</keyword>
<keyword id="KW-0813">Transport</keyword>
<comment type="function">
    <text evidence="1">One of the proteins required for the normal export of preproteins out of the cell cytoplasm. It is a molecular chaperone that binds to a subset of precursor proteins, maintaining them in a translocation-competent state. It also specifically binds to its receptor SecA.</text>
</comment>
<comment type="subunit">
    <text evidence="1">Homotetramer, a dimer of dimers. One homotetramer interacts with 1 SecA dimer.</text>
</comment>
<comment type="subcellular location">
    <subcellularLocation>
        <location evidence="1">Cytoplasm</location>
    </subcellularLocation>
</comment>
<comment type="similarity">
    <text evidence="1">Belongs to the SecB family.</text>
</comment>
<sequence>MSEQNNTEMTFQIQRIYTKDISFEAPNAPHVFQKDWQPEVKLDLDTASTQLADDVYEVVLRVTVTASLGEETAFLCEVQQGGIFSIAGIEGTQMAHCLGAYCPNILFPYARECITSMVSRGTFPQLNLAPVNFDALFMNYLQQQAGEGTEEHQDA</sequence>
<organism>
    <name type="scientific">Escherichia coli O6:K15:H31 (strain 536 / UPEC)</name>
    <dbReference type="NCBI Taxonomy" id="362663"/>
    <lineage>
        <taxon>Bacteria</taxon>
        <taxon>Pseudomonadati</taxon>
        <taxon>Pseudomonadota</taxon>
        <taxon>Gammaproteobacteria</taxon>
        <taxon>Enterobacterales</taxon>
        <taxon>Enterobacteriaceae</taxon>
        <taxon>Escherichia</taxon>
    </lineage>
</organism>
<evidence type="ECO:0000255" key="1">
    <source>
        <dbReference type="HAMAP-Rule" id="MF_00821"/>
    </source>
</evidence>
<name>SECB_ECOL5</name>
<gene>
    <name evidence="1" type="primary">secB</name>
    <name type="ordered locus">ECP_3710</name>
</gene>
<proteinExistence type="inferred from homology"/>
<protein>
    <recommendedName>
        <fullName evidence="1">Protein-export protein SecB</fullName>
    </recommendedName>
</protein>
<reference key="1">
    <citation type="journal article" date="2006" name="Mol. Microbiol.">
        <title>Role of pathogenicity island-associated integrases in the genome plasticity of uropathogenic Escherichia coli strain 536.</title>
        <authorList>
            <person name="Hochhut B."/>
            <person name="Wilde C."/>
            <person name="Balling G."/>
            <person name="Middendorf B."/>
            <person name="Dobrindt U."/>
            <person name="Brzuszkiewicz E."/>
            <person name="Gottschalk G."/>
            <person name="Carniel E."/>
            <person name="Hacker J."/>
        </authorList>
    </citation>
    <scope>NUCLEOTIDE SEQUENCE [LARGE SCALE GENOMIC DNA]</scope>
    <source>
        <strain>536 / UPEC</strain>
    </source>
</reference>
<feature type="chain" id="PRO_1000062473" description="Protein-export protein SecB">
    <location>
        <begin position="1"/>
        <end position="155"/>
    </location>
</feature>
<dbReference type="EMBL" id="CP000247">
    <property type="protein sequence ID" value="ABG71682.1"/>
    <property type="molecule type" value="Genomic_DNA"/>
</dbReference>
<dbReference type="RefSeq" id="WP_000003382.1">
    <property type="nucleotide sequence ID" value="NC_008253.1"/>
</dbReference>
<dbReference type="SMR" id="Q0TBJ7"/>
<dbReference type="GeneID" id="89518465"/>
<dbReference type="KEGG" id="ecp:ECP_3710"/>
<dbReference type="HOGENOM" id="CLU_111574_1_0_6"/>
<dbReference type="Proteomes" id="UP000009182">
    <property type="component" value="Chromosome"/>
</dbReference>
<dbReference type="GO" id="GO:0005737">
    <property type="term" value="C:cytoplasm"/>
    <property type="evidence" value="ECO:0007669"/>
    <property type="project" value="UniProtKB-SubCell"/>
</dbReference>
<dbReference type="GO" id="GO:0051082">
    <property type="term" value="F:unfolded protein binding"/>
    <property type="evidence" value="ECO:0007669"/>
    <property type="project" value="InterPro"/>
</dbReference>
<dbReference type="GO" id="GO:0006457">
    <property type="term" value="P:protein folding"/>
    <property type="evidence" value="ECO:0007669"/>
    <property type="project" value="UniProtKB-UniRule"/>
</dbReference>
<dbReference type="GO" id="GO:0051262">
    <property type="term" value="P:protein tetramerization"/>
    <property type="evidence" value="ECO:0007669"/>
    <property type="project" value="InterPro"/>
</dbReference>
<dbReference type="GO" id="GO:0015031">
    <property type="term" value="P:protein transport"/>
    <property type="evidence" value="ECO:0007669"/>
    <property type="project" value="UniProtKB-UniRule"/>
</dbReference>
<dbReference type="CDD" id="cd00557">
    <property type="entry name" value="Translocase_SecB"/>
    <property type="match status" value="1"/>
</dbReference>
<dbReference type="FunFam" id="3.10.420.10:FF:000001">
    <property type="entry name" value="Protein-export chaperone SecB"/>
    <property type="match status" value="1"/>
</dbReference>
<dbReference type="Gene3D" id="3.10.420.10">
    <property type="entry name" value="SecB-like"/>
    <property type="match status" value="1"/>
</dbReference>
<dbReference type="HAMAP" id="MF_00821">
    <property type="entry name" value="SecB"/>
    <property type="match status" value="1"/>
</dbReference>
<dbReference type="InterPro" id="IPR003708">
    <property type="entry name" value="SecB"/>
</dbReference>
<dbReference type="InterPro" id="IPR035958">
    <property type="entry name" value="SecB-like_sf"/>
</dbReference>
<dbReference type="NCBIfam" id="NF004390">
    <property type="entry name" value="PRK05751.1-1"/>
    <property type="match status" value="1"/>
</dbReference>
<dbReference type="NCBIfam" id="NF004393">
    <property type="entry name" value="PRK05751.1-4"/>
    <property type="match status" value="1"/>
</dbReference>
<dbReference type="NCBIfam" id="TIGR00809">
    <property type="entry name" value="secB"/>
    <property type="match status" value="1"/>
</dbReference>
<dbReference type="PANTHER" id="PTHR36918">
    <property type="match status" value="1"/>
</dbReference>
<dbReference type="PANTHER" id="PTHR36918:SF1">
    <property type="entry name" value="PROTEIN-EXPORT PROTEIN SECB"/>
    <property type="match status" value="1"/>
</dbReference>
<dbReference type="Pfam" id="PF02556">
    <property type="entry name" value="SecB"/>
    <property type="match status" value="1"/>
</dbReference>
<dbReference type="PRINTS" id="PR01594">
    <property type="entry name" value="SECBCHAPRONE"/>
</dbReference>
<dbReference type="SUPFAM" id="SSF54611">
    <property type="entry name" value="SecB-like"/>
    <property type="match status" value="1"/>
</dbReference>